<keyword id="KW-0002">3D-structure</keyword>
<keyword id="KW-0903">Direct protein sequencing</keyword>
<keyword id="KW-0378">Hydrolase</keyword>
<keyword id="KW-1185">Reference proteome</keyword>
<accession>P37025</accession>
<accession>Q8KJQ1</accession>
<reference key="1">
    <citation type="journal article" date="1994" name="Nucleic Acids Res.">
        <title>Systematic sequencing of the Escherichia coli genome: analysis of the 2.4-4.1 min (110,917-193,643 bp) region.</title>
        <authorList>
            <person name="Fujita N."/>
            <person name="Mori H."/>
            <person name="Yura T."/>
            <person name="Ishihama A."/>
        </authorList>
    </citation>
    <scope>NUCLEOTIDE SEQUENCE [LARGE SCALE GENOMIC DNA]</scope>
    <source>
        <strain>K12 / W3110 / ATCC 27325 / DSM 5911</strain>
    </source>
</reference>
<reference key="2">
    <citation type="journal article" date="1997" name="Science">
        <title>The complete genome sequence of Escherichia coli K-12.</title>
        <authorList>
            <person name="Blattner F.R."/>
            <person name="Plunkett G. III"/>
            <person name="Bloch C.A."/>
            <person name="Perna N.T."/>
            <person name="Burland V."/>
            <person name="Riley M."/>
            <person name="Collado-Vides J."/>
            <person name="Glasner J.D."/>
            <person name="Rode C.K."/>
            <person name="Mayhew G.F."/>
            <person name="Gregor J."/>
            <person name="Davis N.W."/>
            <person name="Kirkpatrick H.A."/>
            <person name="Goeden M.A."/>
            <person name="Rose D.J."/>
            <person name="Mau B."/>
            <person name="Shao Y."/>
        </authorList>
    </citation>
    <scope>NUCLEOTIDE SEQUENCE [LARGE SCALE GENOMIC DNA]</scope>
    <source>
        <strain>K12 / MG1655 / ATCC 47076</strain>
    </source>
</reference>
<reference key="3">
    <citation type="journal article" date="2006" name="Mol. Syst. Biol.">
        <title>Highly accurate genome sequences of Escherichia coli K-12 strains MG1655 and W3110.</title>
        <authorList>
            <person name="Hayashi K."/>
            <person name="Morooka N."/>
            <person name="Yamamoto Y."/>
            <person name="Fujita K."/>
            <person name="Isono K."/>
            <person name="Choi S."/>
            <person name="Ohtsubo E."/>
            <person name="Baba T."/>
            <person name="Wanner B.L."/>
            <person name="Mori H."/>
            <person name="Horiuchi T."/>
        </authorList>
    </citation>
    <scope>NUCLEOTIDE SEQUENCE [LARGE SCALE GENOMIC DNA]</scope>
    <source>
        <strain>K12 / W3110 / ATCC 27325 / DSM 5911</strain>
    </source>
</reference>
<reference key="4">
    <citation type="journal article" date="1991" name="J. Bacteriol.">
        <title>Nucleotide sequence and characterization of the sfs1 gene: sfs1 is involved in CRP*-dependent mal gene expression in Escherichia coli.</title>
        <authorList>
            <person name="Kawamukai M."/>
            <person name="Utsumi R."/>
            <person name="Takeda K."/>
            <person name="Higashi A."/>
            <person name="Matsuda H."/>
            <person name="Choi Y.-L."/>
            <person name="Komano T."/>
        </authorList>
    </citation>
    <scope>NUCLEOTIDE SEQUENCE [GENOMIC DNA] OF 107-176</scope>
    <source>
        <strain>K12 / W3110 / ATCC 27325 / DSM 5911</strain>
    </source>
</reference>
<reference key="5">
    <citation type="journal article" date="1996" name="J. Biol. Chem.">
        <title>The 2'-5' RNA ligase of Escherichia coli. Purification, cloning, and genomic disruption.</title>
        <authorList>
            <person name="Arn E.A."/>
            <person name="Abelson J.N."/>
        </authorList>
    </citation>
    <scope>PROTEIN SEQUENCE OF 2-23</scope>
    <scope>FUNCTION AS A LIGASE</scope>
    <scope>DISRUPTION PHENOTYPE</scope>
</reference>
<reference key="6">
    <citation type="journal article" date="1983" name="Cell">
        <title>RNA ligase in bacteria: formation of a 2',5' linkage by an E. coli extract.</title>
        <authorList>
            <person name="Greer C.L."/>
            <person name="Javor B."/>
            <person name="Abelson J."/>
        </authorList>
    </citation>
    <scope>FUNCTION AS A LIGASE</scope>
</reference>
<reference key="7">
    <citation type="journal article" date="2014" name="RNA">
        <title>Structure and mechanism of E. coli RNA 2',3'-cyclic phosphodiesterase.</title>
        <authorList>
            <person name="Remus B.S."/>
            <person name="Jacewicz A."/>
            <person name="Shuman S."/>
        </authorList>
    </citation>
    <scope>X-RAY CRYSTALLOGRAPHY (2.02 ANGSTROMS) IN COMPLEX WITH AMP</scope>
    <scope>FUNCTION AS A PHOSPHODIESTERASE</scope>
    <scope>CATALYTIC ACTIVITY</scope>
    <scope>SUBUNIT</scope>
    <scope>MUTAGENESIS OF HIS-43; THR-45; PHE-48; HIS-125; THR-127 AND ARG-130</scope>
    <scope>ACTIVE SITES</scope>
</reference>
<name>THPR_ECOLI</name>
<comment type="function">
    <text evidence="2 3 4">Hydrolyzes RNA 2',3'-cyclic phosphodiester to an RNA 2'-phosphomonoester (PubMed:25239919). In vitro, can also ligate 5' and 3' half-tRNA molecules with 2',3'-cyclic phosphate and 5'-hydroxyl termini, respectively, to the product containing the 2'-5' phosphodiester linkage. This reaction does not require ATP and is reversible (PubMed:6347395, PubMed:8940112).</text>
</comment>
<comment type="catalytic activity">
    <reaction evidence="1 2">
        <text>a 3'-end 2',3'-cyclophospho-ribonucleotide-RNA + H2O = a 3'-end 2'-phospho-ribonucleotide-RNA + H(+)</text>
        <dbReference type="Rhea" id="RHEA:11828"/>
        <dbReference type="Rhea" id="RHEA-COMP:10464"/>
        <dbReference type="Rhea" id="RHEA-COMP:17353"/>
        <dbReference type="ChEBI" id="CHEBI:15377"/>
        <dbReference type="ChEBI" id="CHEBI:15378"/>
        <dbReference type="ChEBI" id="CHEBI:83064"/>
        <dbReference type="ChEBI" id="CHEBI:173113"/>
        <dbReference type="EC" id="3.1.4.58"/>
    </reaction>
</comment>
<comment type="subunit">
    <text evidence="2">Monomer.</text>
</comment>
<comment type="disruption phenotype">
    <text evidence="4">Disruption abolishes ligase activity in cell lysates, but mutants grow normally under laboratory conditions.</text>
</comment>
<comment type="similarity">
    <text evidence="1 6">Belongs to the 2H phosphoesterase superfamily. ThpR family.</text>
</comment>
<comment type="caution">
    <text evidence="7 8">Was originally thought to be a 2',5'-RNA ligase.</text>
</comment>
<comment type="sequence caution" evidence="6">
    <conflict type="frameshift">
        <sequence resource="EMBL" id="M60726"/>
    </conflict>
</comment>
<evidence type="ECO:0000255" key="1">
    <source>
        <dbReference type="HAMAP-Rule" id="MF_01940"/>
    </source>
</evidence>
<evidence type="ECO:0000269" key="2">
    <source>
    </source>
</evidence>
<evidence type="ECO:0000269" key="3">
    <source>
    </source>
</evidence>
<evidence type="ECO:0000269" key="4">
    <source>
    </source>
</evidence>
<evidence type="ECO:0000303" key="5">
    <source>
    </source>
</evidence>
<evidence type="ECO:0000305" key="6"/>
<evidence type="ECO:0000305" key="7">
    <source>
    </source>
</evidence>
<evidence type="ECO:0000305" key="8">
    <source>
    </source>
</evidence>
<evidence type="ECO:0007829" key="9">
    <source>
        <dbReference type="PDB" id="4QAK"/>
    </source>
</evidence>
<protein>
    <recommendedName>
        <fullName evidence="1 5">RNA 2',3'-cyclic phosphodiesterase</fullName>
        <shortName evidence="1 5">RNA 2',3'-CPDase</shortName>
        <ecNumber evidence="1 2">3.1.4.58</ecNumber>
    </recommendedName>
    <alternativeName>
        <fullName evidence="5">Two-histidine 2',3'-cyclic phosphodiesterase acting on RNA</fullName>
    </alternativeName>
</protein>
<organism>
    <name type="scientific">Escherichia coli (strain K12)</name>
    <dbReference type="NCBI Taxonomy" id="83333"/>
    <lineage>
        <taxon>Bacteria</taxon>
        <taxon>Pseudomonadati</taxon>
        <taxon>Pseudomonadota</taxon>
        <taxon>Gammaproteobacteria</taxon>
        <taxon>Enterobacterales</taxon>
        <taxon>Enterobacteriaceae</taxon>
        <taxon>Escherichia</taxon>
    </lineage>
</organism>
<feature type="initiator methionine" description="Removed" evidence="4">
    <location>
        <position position="1"/>
    </location>
</feature>
<feature type="chain" id="PRO_0000084421" description="RNA 2',3'-cyclic phosphodiesterase">
    <location>
        <begin position="2"/>
        <end position="176"/>
    </location>
</feature>
<feature type="short sequence motif" description="HXTX 1" evidence="1 6">
    <location>
        <begin position="43"/>
        <end position="46"/>
    </location>
</feature>
<feature type="short sequence motif" description="HXTX 2" evidence="1 6">
    <location>
        <begin position="125"/>
        <end position="128"/>
    </location>
</feature>
<feature type="active site" description="Proton donor" evidence="1 2">
    <location>
        <position position="43"/>
    </location>
</feature>
<feature type="active site" description="Proton acceptor" evidence="1 2">
    <location>
        <position position="125"/>
    </location>
</feature>
<feature type="mutagenesis site" description="Lack of CPDase activity." evidence="2">
    <original>H</original>
    <variation>A</variation>
    <location>
        <position position="43"/>
    </location>
</feature>
<feature type="mutagenesis site" description="Lack of CPDase activity." evidence="2">
    <original>T</original>
    <variation>A</variation>
    <location>
        <position position="45"/>
    </location>
</feature>
<feature type="mutagenesis site" description="Decreases CPDase activity." evidence="2">
    <original>F</original>
    <variation>A</variation>
    <location>
        <position position="48"/>
    </location>
</feature>
<feature type="mutagenesis site" description="Lack of CPDase activity." evidence="2">
    <original>H</original>
    <variation>A</variation>
    <location>
        <position position="125"/>
    </location>
</feature>
<feature type="mutagenesis site" description="Does not affect CPDase activity." evidence="2">
    <original>T</original>
    <variation>A</variation>
    <location>
        <position position="127"/>
    </location>
</feature>
<feature type="mutagenesis site" description="Lack of CPDase activity." evidence="2">
    <original>R</original>
    <variation>A</variation>
    <location>
        <position position="130"/>
    </location>
</feature>
<feature type="sequence conflict" description="In Ref. 4; M60726." evidence="6" ref="4">
    <original>L</original>
    <variation>V</variation>
    <location>
        <position position="174"/>
    </location>
</feature>
<feature type="strand" evidence="9">
    <location>
        <begin position="5"/>
        <end position="11"/>
    </location>
</feature>
<feature type="helix" evidence="9">
    <location>
        <begin position="15"/>
        <end position="28"/>
    </location>
</feature>
<feature type="helix" evidence="9">
    <location>
        <begin position="31"/>
        <end position="33"/>
    </location>
</feature>
<feature type="helix" evidence="9">
    <location>
        <begin position="39"/>
        <end position="41"/>
    </location>
</feature>
<feature type="strand" evidence="9">
    <location>
        <begin position="44"/>
        <end position="52"/>
    </location>
</feature>
<feature type="helix" evidence="9">
    <location>
        <begin position="54"/>
        <end position="64"/>
    </location>
</feature>
<feature type="strand" evidence="9">
    <location>
        <begin position="72"/>
        <end position="75"/>
    </location>
</feature>
<feature type="strand" evidence="9">
    <location>
        <begin position="78"/>
        <end position="82"/>
    </location>
</feature>
<feature type="turn" evidence="9">
    <location>
        <begin position="83"/>
        <end position="86"/>
    </location>
</feature>
<feature type="strand" evidence="9">
    <location>
        <begin position="87"/>
        <end position="91"/>
    </location>
</feature>
<feature type="helix" evidence="9">
    <location>
        <begin position="97"/>
        <end position="112"/>
    </location>
</feature>
<feature type="strand" evidence="9">
    <location>
        <begin position="126"/>
        <end position="131"/>
    </location>
</feature>
<feature type="strand" evidence="9">
    <location>
        <begin position="146"/>
        <end position="149"/>
    </location>
</feature>
<feature type="strand" evidence="9">
    <location>
        <begin position="151"/>
        <end position="159"/>
    </location>
</feature>
<feature type="strand" evidence="9">
    <location>
        <begin position="161"/>
        <end position="173"/>
    </location>
</feature>
<gene>
    <name evidence="1 5" type="primary">thpR</name>
    <name type="synonym">ligT</name>
    <name type="synonym">yadP</name>
    <name type="ordered locus">b0147</name>
    <name type="ordered locus">JW5011</name>
</gene>
<proteinExistence type="evidence at protein level"/>
<sequence>MSEPQRLFFAIDLPAEIREQIIHWRATHFPPEAGRPVAADNLHLTLAFLGEVSAEKEKALSLLAGRIRQPGFTLTLDDAGQWLRSRVVWLGMRQPPRGLIQLANMLRSQAARSGCFQSNRPFHPHITLLRDASEAVTIPPPGFNWSYAVTEFTLYASSFARGRTRYTPLKRWALTQ</sequence>
<dbReference type="EC" id="3.1.4.58" evidence="1 2"/>
<dbReference type="EMBL" id="U00096">
    <property type="protein sequence ID" value="AAC73258.2"/>
    <property type="molecule type" value="Genomic_DNA"/>
</dbReference>
<dbReference type="EMBL" id="AP009048">
    <property type="protein sequence ID" value="BAB96724.2"/>
    <property type="molecule type" value="Genomic_DNA"/>
</dbReference>
<dbReference type="EMBL" id="M60726">
    <property type="status" value="NOT_ANNOTATED_CDS"/>
    <property type="molecule type" value="Genomic_DNA"/>
</dbReference>
<dbReference type="PIR" id="C64738">
    <property type="entry name" value="C64738"/>
</dbReference>
<dbReference type="RefSeq" id="NP_414689.4">
    <property type="nucleotide sequence ID" value="NC_000913.3"/>
</dbReference>
<dbReference type="RefSeq" id="WP_001294700.1">
    <property type="nucleotide sequence ID" value="NZ_STEB01000010.1"/>
</dbReference>
<dbReference type="PDB" id="4QAK">
    <property type="method" value="X-ray"/>
    <property type="resolution" value="2.02 A"/>
    <property type="chains" value="A/B=1-176"/>
</dbReference>
<dbReference type="PDBsum" id="4QAK"/>
<dbReference type="SMR" id="P37025"/>
<dbReference type="BioGRID" id="4259744">
    <property type="interactions" value="116"/>
</dbReference>
<dbReference type="FunCoup" id="P37025">
    <property type="interactions" value="39"/>
</dbReference>
<dbReference type="STRING" id="511145.b0147"/>
<dbReference type="jPOST" id="P37025"/>
<dbReference type="PaxDb" id="511145-b0147"/>
<dbReference type="EnsemblBacteria" id="AAC73258">
    <property type="protein sequence ID" value="AAC73258"/>
    <property type="gene ID" value="b0147"/>
</dbReference>
<dbReference type="GeneID" id="93777280"/>
<dbReference type="GeneID" id="944848"/>
<dbReference type="KEGG" id="ecj:JW5011"/>
<dbReference type="KEGG" id="eco:b0147"/>
<dbReference type="KEGG" id="ecoc:C3026_00640"/>
<dbReference type="PATRIC" id="fig|1411691.4.peg.2134"/>
<dbReference type="EchoBASE" id="EB2234"/>
<dbReference type="eggNOG" id="COG1514">
    <property type="taxonomic scope" value="Bacteria"/>
</dbReference>
<dbReference type="HOGENOM" id="CLU_081251_2_1_6"/>
<dbReference type="InParanoid" id="P37025"/>
<dbReference type="OMA" id="NDAGHWP"/>
<dbReference type="OrthoDB" id="7061261at2"/>
<dbReference type="PhylomeDB" id="P37025"/>
<dbReference type="BioCyc" id="EcoCyc:EG12330-MONOMER"/>
<dbReference type="BioCyc" id="MetaCyc:EG12330-MONOMER"/>
<dbReference type="BRENDA" id="3.1.4.58">
    <property type="organism ID" value="2026"/>
</dbReference>
<dbReference type="BRENDA" id="6.5.1.B1">
    <property type="organism ID" value="2026"/>
</dbReference>
<dbReference type="EvolutionaryTrace" id="P37025"/>
<dbReference type="PRO" id="PR:P37025"/>
<dbReference type="Proteomes" id="UP000000625">
    <property type="component" value="Chromosome"/>
</dbReference>
<dbReference type="GO" id="GO:0004113">
    <property type="term" value="F:2',3'-cyclic-nucleotide 3'-phosphodiesterase activity"/>
    <property type="evidence" value="ECO:0000314"/>
    <property type="project" value="EcoCyc"/>
</dbReference>
<dbReference type="GO" id="GO:0008664">
    <property type="term" value="F:RNA 2',3'-cyclic 3'-phosphodiesterase activity"/>
    <property type="evidence" value="ECO:0000314"/>
    <property type="project" value="EcoCyc"/>
</dbReference>
<dbReference type="FunFam" id="3.90.1140.10:FF:000003">
    <property type="entry name" value="RNA 2',3'-cyclic phosphodiesterase"/>
    <property type="match status" value="1"/>
</dbReference>
<dbReference type="Gene3D" id="3.90.1140.10">
    <property type="entry name" value="Cyclic phosphodiesterase"/>
    <property type="match status" value="1"/>
</dbReference>
<dbReference type="HAMAP" id="MF_01940">
    <property type="entry name" value="RNA_CPDase"/>
    <property type="match status" value="1"/>
</dbReference>
<dbReference type="InterPro" id="IPR009097">
    <property type="entry name" value="Cyclic_Pdiesterase"/>
</dbReference>
<dbReference type="InterPro" id="IPR004175">
    <property type="entry name" value="RNA_CPDase"/>
</dbReference>
<dbReference type="NCBIfam" id="TIGR02258">
    <property type="entry name" value="2_5_ligase"/>
    <property type="match status" value="1"/>
</dbReference>
<dbReference type="NCBIfam" id="NF011704">
    <property type="entry name" value="PRK15124.1"/>
    <property type="match status" value="1"/>
</dbReference>
<dbReference type="PANTHER" id="PTHR35561">
    <property type="entry name" value="RNA 2',3'-CYCLIC PHOSPHODIESTERASE"/>
    <property type="match status" value="1"/>
</dbReference>
<dbReference type="PANTHER" id="PTHR35561:SF1">
    <property type="entry name" value="RNA 2',3'-CYCLIC PHOSPHODIESTERASE"/>
    <property type="match status" value="1"/>
</dbReference>
<dbReference type="Pfam" id="PF13563">
    <property type="entry name" value="2_5_RNA_ligase2"/>
    <property type="match status" value="1"/>
</dbReference>
<dbReference type="SUPFAM" id="SSF55144">
    <property type="entry name" value="LigT-like"/>
    <property type="match status" value="1"/>
</dbReference>